<name>YO17_ADEG1</name>
<organismHost>
    <name type="scientific">Galliformes</name>
    <dbReference type="NCBI Taxonomy" id="8976"/>
</organismHost>
<organism>
    <name type="scientific">Fowl adenovirus A serotype 1 (strain CELO / Phelps)</name>
    <name type="common">FAdV-1</name>
    <name type="synonym">Avian adenovirus gal1 (strain Phelps)</name>
    <dbReference type="NCBI Taxonomy" id="10553"/>
    <lineage>
        <taxon>Viruses</taxon>
        <taxon>Varidnaviria</taxon>
        <taxon>Bamfordvirae</taxon>
        <taxon>Preplasmiviricota</taxon>
        <taxon>Tectiliviricetes</taxon>
        <taxon>Rowavirales</taxon>
        <taxon>Adenoviridae</taxon>
        <taxon>Aviadenovirus</taxon>
        <taxon>Fowl aviadenovirus A</taxon>
    </lineage>
</organism>
<keyword id="KW-1185">Reference proteome</keyword>
<reference key="1">
    <citation type="journal article" date="1996" name="J. Virol.">
        <title>The complete DNA sequence and genomic organization of the avian adenovirus CELO.</title>
        <authorList>
            <person name="Chiocca S."/>
            <person name="Kurzbauer R."/>
            <person name="Schaffner G."/>
            <person name="Baker A."/>
            <person name="Mautner V."/>
            <person name="Cotten M."/>
        </authorList>
    </citation>
    <scope>NUCLEOTIDE SEQUENCE [LARGE SCALE GENOMIC DNA]</scope>
</reference>
<reference key="2">
    <citation type="journal article" date="1990" name="Nucleic Acids Res.">
        <title>Sequence of an avian adenovirus (CELO) DNA fragment (0-11.2%).</title>
        <authorList>
            <person name="Akopian T.A."/>
            <person name="Kruglyak V.A."/>
            <person name="Rivkina M.B."/>
            <person name="Naroditsky B.S."/>
            <person name="Tikhonenko T.I."/>
        </authorList>
    </citation>
    <scope>NUCLEOTIDE SEQUENCE [GENOMIC DNA] OF 1-116</scope>
</reference>
<dbReference type="EMBL" id="U46933">
    <property type="protein sequence ID" value="AAC54928.1"/>
    <property type="molecule type" value="Genomic_DNA"/>
</dbReference>
<dbReference type="EMBL" id="X17217">
    <property type="protein sequence ID" value="CAA35090.1"/>
    <property type="molecule type" value="Genomic_DNA"/>
</dbReference>
<dbReference type="PIR" id="S10008">
    <property type="entry name" value="S10008"/>
</dbReference>
<dbReference type="RefSeq" id="NP_043902.1">
    <property type="nucleotide sequence ID" value="NC_001720.1"/>
</dbReference>
<dbReference type="KEGG" id="vg:1733471"/>
<dbReference type="Proteomes" id="UP000001594">
    <property type="component" value="Segment"/>
</dbReference>
<dbReference type="InterPro" id="IPR020226">
    <property type="entry name" value="Avian_adenovirus_Orf17"/>
</dbReference>
<dbReference type="Pfam" id="PF17611">
    <property type="entry name" value="DUF5506"/>
    <property type="match status" value="1"/>
</dbReference>
<sequence length="179" mass="20922">MPLYLCFGAAAPVSILWREELFWGFVAAVKRRWHTVYARTNVDIQYPMAYCVGIQSLSPCKCHVTVVVCLTFLDLRMSAINEATKIMRAFFKTFFYHHGKVPRGRWFKLYRNDWCKDPNLTVGNYIVASGALPLMLGWARSTGLRFSTFTYSDEALWSHRRRDRRLARRREKLENKVSG</sequence>
<feature type="chain" id="PRO_0000221937" description="Uncharacterized protein ORF17">
    <location>
        <begin position="1"/>
        <end position="179"/>
    </location>
</feature>
<protein>
    <recommendedName>
        <fullName>Uncharacterized protein ORF17</fullName>
    </recommendedName>
</protein>
<proteinExistence type="predicted"/>
<gene>
    <name type="ORF">17</name>
</gene>
<accession>P20743</accession>
<accession>Q64771</accession>